<keyword id="KW-0975">Bacterial flagellum</keyword>
<keyword id="KW-0998">Cell outer membrane</keyword>
<keyword id="KW-0449">Lipoprotein</keyword>
<keyword id="KW-0472">Membrane</keyword>
<keyword id="KW-0564">Palmitate</keyword>
<keyword id="KW-0732">Signal</keyword>
<sequence length="232" mass="24709">MQKYALHAYPVMALMVATLTGCAWIPAKPLVQGATTAQPIPGPVPVANGSIFQSAQPINYGYQPLFEDRRPRNIGDTLTIVLQENVSASKSSSANASRDGKTSFGFDTVPRYLQGLFGNSRADMEASGGNSFNGKGGANASNTFSGTLTVTVDQVLANGNLHVVGEKQIAINQGTEFIRFSGVVNPRTISGSNSVPSTQVADARIEYVGNGYINEAQNMGWLQRFFLNLSPM</sequence>
<feature type="signal peptide" evidence="1">
    <location>
        <begin position="1"/>
        <end position="21"/>
    </location>
</feature>
<feature type="chain" id="PRO_1000123958" description="Flagellar L-ring protein">
    <location>
        <begin position="22"/>
        <end position="232"/>
    </location>
</feature>
<feature type="lipid moiety-binding region" description="N-palmitoyl cysteine" evidence="1">
    <location>
        <position position="22"/>
    </location>
</feature>
<feature type="lipid moiety-binding region" description="S-diacylglycerol cysteine" evidence="1">
    <location>
        <position position="22"/>
    </location>
</feature>
<proteinExistence type="inferred from homology"/>
<name>FLGH_SALPK</name>
<dbReference type="EMBL" id="FM200053">
    <property type="protein sequence ID" value="CAR59738.1"/>
    <property type="molecule type" value="Genomic_DNA"/>
</dbReference>
<dbReference type="RefSeq" id="WP_001174897.1">
    <property type="nucleotide sequence ID" value="NC_011147.1"/>
</dbReference>
<dbReference type="SMR" id="B5BBA9"/>
<dbReference type="KEGG" id="sek:SSPA1553"/>
<dbReference type="HOGENOM" id="CLU_069313_0_0_6"/>
<dbReference type="Proteomes" id="UP000001869">
    <property type="component" value="Chromosome"/>
</dbReference>
<dbReference type="GO" id="GO:0009427">
    <property type="term" value="C:bacterial-type flagellum basal body, distal rod, L ring"/>
    <property type="evidence" value="ECO:0007669"/>
    <property type="project" value="InterPro"/>
</dbReference>
<dbReference type="GO" id="GO:0009279">
    <property type="term" value="C:cell outer membrane"/>
    <property type="evidence" value="ECO:0007669"/>
    <property type="project" value="UniProtKB-SubCell"/>
</dbReference>
<dbReference type="GO" id="GO:0003774">
    <property type="term" value="F:cytoskeletal motor activity"/>
    <property type="evidence" value="ECO:0007669"/>
    <property type="project" value="InterPro"/>
</dbReference>
<dbReference type="GO" id="GO:0071973">
    <property type="term" value="P:bacterial-type flagellum-dependent cell motility"/>
    <property type="evidence" value="ECO:0007669"/>
    <property type="project" value="InterPro"/>
</dbReference>
<dbReference type="HAMAP" id="MF_00415">
    <property type="entry name" value="FlgH"/>
    <property type="match status" value="1"/>
</dbReference>
<dbReference type="InterPro" id="IPR000527">
    <property type="entry name" value="Flag_Lring"/>
</dbReference>
<dbReference type="NCBIfam" id="NF001301">
    <property type="entry name" value="PRK00249.1-1"/>
    <property type="match status" value="1"/>
</dbReference>
<dbReference type="PANTHER" id="PTHR34933">
    <property type="entry name" value="FLAGELLAR L-RING PROTEIN"/>
    <property type="match status" value="1"/>
</dbReference>
<dbReference type="PANTHER" id="PTHR34933:SF3">
    <property type="entry name" value="FLAGELLAR L-RING PROTEIN"/>
    <property type="match status" value="1"/>
</dbReference>
<dbReference type="Pfam" id="PF02107">
    <property type="entry name" value="FlgH"/>
    <property type="match status" value="1"/>
</dbReference>
<dbReference type="PRINTS" id="PR01008">
    <property type="entry name" value="FLGLRINGFLGH"/>
</dbReference>
<dbReference type="PROSITE" id="PS51257">
    <property type="entry name" value="PROKAR_LIPOPROTEIN"/>
    <property type="match status" value="1"/>
</dbReference>
<organism>
    <name type="scientific">Salmonella paratyphi A (strain AKU_12601)</name>
    <dbReference type="NCBI Taxonomy" id="554290"/>
    <lineage>
        <taxon>Bacteria</taxon>
        <taxon>Pseudomonadati</taxon>
        <taxon>Pseudomonadota</taxon>
        <taxon>Gammaproteobacteria</taxon>
        <taxon>Enterobacterales</taxon>
        <taxon>Enterobacteriaceae</taxon>
        <taxon>Salmonella</taxon>
    </lineage>
</organism>
<comment type="function">
    <text evidence="1">Assembles around the rod to form the L-ring and probably protects the motor/basal body from shearing forces during rotation.</text>
</comment>
<comment type="subunit">
    <text evidence="1">The basal body constitutes a major portion of the flagellar organelle and consists of four rings (L,P,S, and M) mounted on a central rod.</text>
</comment>
<comment type="subcellular location">
    <subcellularLocation>
        <location evidence="1">Cell outer membrane</location>
        <topology evidence="1">Lipid-anchor</topology>
    </subcellularLocation>
    <subcellularLocation>
        <location evidence="1">Bacterial flagellum basal body</location>
    </subcellularLocation>
</comment>
<comment type="similarity">
    <text evidence="1">Belongs to the FlgH family.</text>
</comment>
<gene>
    <name evidence="1" type="primary">flgH</name>
    <name type="ordered locus">SSPA1553</name>
</gene>
<protein>
    <recommendedName>
        <fullName evidence="1">Flagellar L-ring protein</fullName>
    </recommendedName>
    <alternativeName>
        <fullName evidence="1">Basal body L-ring protein</fullName>
    </alternativeName>
</protein>
<accession>B5BBA9</accession>
<evidence type="ECO:0000255" key="1">
    <source>
        <dbReference type="HAMAP-Rule" id="MF_00415"/>
    </source>
</evidence>
<reference key="1">
    <citation type="journal article" date="2009" name="BMC Genomics">
        <title>Pseudogene accumulation in the evolutionary histories of Salmonella enterica serovars Paratyphi A and Typhi.</title>
        <authorList>
            <person name="Holt K.E."/>
            <person name="Thomson N.R."/>
            <person name="Wain J."/>
            <person name="Langridge G.C."/>
            <person name="Hasan R."/>
            <person name="Bhutta Z.A."/>
            <person name="Quail M.A."/>
            <person name="Norbertczak H."/>
            <person name="Walker D."/>
            <person name="Simmonds M."/>
            <person name="White B."/>
            <person name="Bason N."/>
            <person name="Mungall K."/>
            <person name="Dougan G."/>
            <person name="Parkhill J."/>
        </authorList>
    </citation>
    <scope>NUCLEOTIDE SEQUENCE [LARGE SCALE GENOMIC DNA]</scope>
    <source>
        <strain>AKU_12601</strain>
    </source>
</reference>